<accession>B7JIJ9</accession>
<organism>
    <name type="scientific">Bacillus cereus (strain AH820)</name>
    <dbReference type="NCBI Taxonomy" id="405535"/>
    <lineage>
        <taxon>Bacteria</taxon>
        <taxon>Bacillati</taxon>
        <taxon>Bacillota</taxon>
        <taxon>Bacilli</taxon>
        <taxon>Bacillales</taxon>
        <taxon>Bacillaceae</taxon>
        <taxon>Bacillus</taxon>
        <taxon>Bacillus cereus group</taxon>
    </lineage>
</organism>
<keyword id="KW-0687">Ribonucleoprotein</keyword>
<keyword id="KW-0689">Ribosomal protein</keyword>
<keyword id="KW-0694">RNA-binding</keyword>
<keyword id="KW-0699">rRNA-binding</keyword>
<comment type="function">
    <text evidence="1">Binds as a heterodimer with protein bS6 to the central domain of the 16S rRNA, where it helps stabilize the platform of the 30S subunit.</text>
</comment>
<comment type="subunit">
    <text evidence="1">Part of the 30S ribosomal subunit. Forms a tight heterodimer with protein bS6.</text>
</comment>
<comment type="similarity">
    <text evidence="1">Belongs to the bacterial ribosomal protein bS18 family.</text>
</comment>
<feature type="chain" id="PRO_1000196517" description="Small ribosomal subunit protein bS18">
    <location>
        <begin position="1"/>
        <end position="77"/>
    </location>
</feature>
<dbReference type="EMBL" id="CP001283">
    <property type="protein sequence ID" value="ACK91659.1"/>
    <property type="molecule type" value="Genomic_DNA"/>
</dbReference>
<dbReference type="RefSeq" id="WP_000918874.1">
    <property type="nucleotide sequence ID" value="NC_011773.1"/>
</dbReference>
<dbReference type="SMR" id="B7JIJ9"/>
<dbReference type="GeneID" id="92885945"/>
<dbReference type="KEGG" id="bcu:BCAH820_5582"/>
<dbReference type="HOGENOM" id="CLU_148710_2_2_9"/>
<dbReference type="Proteomes" id="UP000001363">
    <property type="component" value="Chromosome"/>
</dbReference>
<dbReference type="GO" id="GO:0022627">
    <property type="term" value="C:cytosolic small ribosomal subunit"/>
    <property type="evidence" value="ECO:0007669"/>
    <property type="project" value="TreeGrafter"/>
</dbReference>
<dbReference type="GO" id="GO:0070181">
    <property type="term" value="F:small ribosomal subunit rRNA binding"/>
    <property type="evidence" value="ECO:0007669"/>
    <property type="project" value="TreeGrafter"/>
</dbReference>
<dbReference type="GO" id="GO:0003735">
    <property type="term" value="F:structural constituent of ribosome"/>
    <property type="evidence" value="ECO:0007669"/>
    <property type="project" value="InterPro"/>
</dbReference>
<dbReference type="GO" id="GO:0006412">
    <property type="term" value="P:translation"/>
    <property type="evidence" value="ECO:0007669"/>
    <property type="project" value="UniProtKB-UniRule"/>
</dbReference>
<dbReference type="FunFam" id="4.10.640.10:FF:000003">
    <property type="entry name" value="30S ribosomal protein S18"/>
    <property type="match status" value="1"/>
</dbReference>
<dbReference type="Gene3D" id="4.10.640.10">
    <property type="entry name" value="Ribosomal protein S18"/>
    <property type="match status" value="1"/>
</dbReference>
<dbReference type="HAMAP" id="MF_00270">
    <property type="entry name" value="Ribosomal_bS18"/>
    <property type="match status" value="1"/>
</dbReference>
<dbReference type="InterPro" id="IPR001648">
    <property type="entry name" value="Ribosomal_bS18"/>
</dbReference>
<dbReference type="InterPro" id="IPR018275">
    <property type="entry name" value="Ribosomal_bS18_CS"/>
</dbReference>
<dbReference type="InterPro" id="IPR036870">
    <property type="entry name" value="Ribosomal_bS18_sf"/>
</dbReference>
<dbReference type="NCBIfam" id="TIGR00165">
    <property type="entry name" value="S18"/>
    <property type="match status" value="1"/>
</dbReference>
<dbReference type="PANTHER" id="PTHR13479">
    <property type="entry name" value="30S RIBOSOMAL PROTEIN S18"/>
    <property type="match status" value="1"/>
</dbReference>
<dbReference type="PANTHER" id="PTHR13479:SF40">
    <property type="entry name" value="SMALL RIBOSOMAL SUBUNIT PROTEIN BS18M"/>
    <property type="match status" value="1"/>
</dbReference>
<dbReference type="Pfam" id="PF01084">
    <property type="entry name" value="Ribosomal_S18"/>
    <property type="match status" value="1"/>
</dbReference>
<dbReference type="PRINTS" id="PR00974">
    <property type="entry name" value="RIBOSOMALS18"/>
</dbReference>
<dbReference type="SUPFAM" id="SSF46911">
    <property type="entry name" value="Ribosomal protein S18"/>
    <property type="match status" value="1"/>
</dbReference>
<dbReference type="PROSITE" id="PS00057">
    <property type="entry name" value="RIBOSOMAL_S18"/>
    <property type="match status" value="1"/>
</dbReference>
<evidence type="ECO:0000255" key="1">
    <source>
        <dbReference type="HAMAP-Rule" id="MF_00270"/>
    </source>
</evidence>
<evidence type="ECO:0000305" key="2"/>
<gene>
    <name evidence="1" type="primary">rpsR</name>
    <name type="ordered locus">BCAH820_5582</name>
</gene>
<protein>
    <recommendedName>
        <fullName evidence="1">Small ribosomal subunit protein bS18</fullName>
    </recommendedName>
    <alternativeName>
        <fullName evidence="2">30S ribosomal protein S18</fullName>
    </alternativeName>
</protein>
<proteinExistence type="inferred from homology"/>
<name>RS18_BACC0</name>
<sequence>MAGRKGGRAKRRKVCFFTSNGITRIDYKDVDLLKRFVSERGKILPRRVTGTSAKYQRKLTVAIKRARQMALLPYVGE</sequence>
<reference key="1">
    <citation type="submission" date="2008-10" db="EMBL/GenBank/DDBJ databases">
        <title>Genome sequence of Bacillus cereus AH820.</title>
        <authorList>
            <person name="Dodson R.J."/>
            <person name="Durkin A.S."/>
            <person name="Rosovitz M.J."/>
            <person name="Rasko D.A."/>
            <person name="Hoffmaster A."/>
            <person name="Ravel J."/>
            <person name="Sutton G."/>
        </authorList>
    </citation>
    <scope>NUCLEOTIDE SEQUENCE [LARGE SCALE GENOMIC DNA]</scope>
    <source>
        <strain>AH820</strain>
    </source>
</reference>